<accession>Q9D2M8</accession>
<accession>A6X924</accession>
<accession>Q8BGH6</accession>
<accession>Q8CE99</accession>
<accession>Q8K2V7</accession>
<accession>Q9CYD7</accession>
<accession>Q9ERI8</accession>
<sequence length="145" mass="16367">MAVSTGVKVPRNFRLLEELEEGQKGVGDGTVSWGLEDDEDMTLTRWTGMIIGPPRTNYENRIYSLKVECGSKYPEAPPSVRFVTKINMNGINNSSGMVDARSIPVLAKWQNSYSIKVILQELRRLMMSKENMKLPQPPEGQTYNN</sequence>
<proteinExistence type="evidence at protein level"/>
<gene>
    <name type="primary">Ube2v2</name>
    <name type="synonym">Mms2</name>
    <name type="synonym">Uev2</name>
</gene>
<keyword id="KW-0007">Acetylation</keyword>
<keyword id="KW-0025">Alternative splicing</keyword>
<keyword id="KW-1185">Reference proteome</keyword>
<keyword id="KW-0833">Ubl conjugation pathway</keyword>
<name>UB2V2_MOUSE</name>
<evidence type="ECO:0000250" key="1"/>
<evidence type="ECO:0000250" key="2">
    <source>
        <dbReference type="UniProtKB" id="Q15819"/>
    </source>
</evidence>
<evidence type="ECO:0000255" key="3">
    <source>
        <dbReference type="PROSITE-ProRule" id="PRU00388"/>
    </source>
</evidence>
<evidence type="ECO:0000269" key="4">
    <source>
    </source>
</evidence>
<evidence type="ECO:0000303" key="5">
    <source>
    </source>
</evidence>
<evidence type="ECO:0000305" key="6"/>
<protein>
    <recommendedName>
        <fullName>Ubiquitin-conjugating enzyme E2 variant 2</fullName>
    </recommendedName>
    <alternativeName>
        <fullName>Ubc-like protein MMS2</fullName>
    </alternativeName>
</protein>
<dbReference type="EMBL" id="AF303828">
    <property type="protein sequence ID" value="AAG22084.1"/>
    <property type="molecule type" value="mRNA"/>
</dbReference>
<dbReference type="EMBL" id="AK017786">
    <property type="protein sequence ID" value="BAB30932.1"/>
    <property type="molecule type" value="mRNA"/>
</dbReference>
<dbReference type="EMBL" id="AK019486">
    <property type="protein sequence ID" value="BAB31753.1"/>
    <property type="molecule type" value="mRNA"/>
</dbReference>
<dbReference type="EMBL" id="AK028472">
    <property type="protein sequence ID" value="BAC25968.1"/>
    <property type="molecule type" value="mRNA"/>
</dbReference>
<dbReference type="EMBL" id="AK028742">
    <property type="protein sequence ID" value="BAC26094.1"/>
    <property type="molecule type" value="mRNA"/>
</dbReference>
<dbReference type="EMBL" id="AK031233">
    <property type="protein sequence ID" value="BAC27311.1"/>
    <property type="molecule type" value="mRNA"/>
</dbReference>
<dbReference type="EMBL" id="AK033016">
    <property type="protein sequence ID" value="BAC28128.1"/>
    <property type="molecule type" value="mRNA"/>
</dbReference>
<dbReference type="EMBL" id="CT010522">
    <property type="status" value="NOT_ANNOTATED_CDS"/>
    <property type="molecule type" value="Genomic_DNA"/>
</dbReference>
<dbReference type="EMBL" id="BC029742">
    <property type="protein sequence ID" value="AAH29742.1"/>
    <property type="status" value="ALT_INIT"/>
    <property type="molecule type" value="mRNA"/>
</dbReference>
<dbReference type="EMBL" id="BC058374">
    <property type="protein sequence ID" value="AAH58374.1"/>
    <property type="molecule type" value="mRNA"/>
</dbReference>
<dbReference type="EMBL" id="BC083098">
    <property type="protein sequence ID" value="AAH83098.1"/>
    <property type="molecule type" value="mRNA"/>
</dbReference>
<dbReference type="CCDS" id="CCDS37265.1">
    <molecule id="Q9D2M8-1"/>
</dbReference>
<dbReference type="CCDS" id="CCDS49771.1">
    <molecule id="Q9D2M8-2"/>
</dbReference>
<dbReference type="RefSeq" id="NP_001152823.1">
    <molecule id="Q9D2M8-2"/>
    <property type="nucleotide sequence ID" value="NM_001159351.1"/>
</dbReference>
<dbReference type="RefSeq" id="NP_076074.2">
    <molecule id="Q9D2M8-1"/>
    <property type="nucleotide sequence ID" value="NM_023585.4"/>
</dbReference>
<dbReference type="SMR" id="Q9D2M8"/>
<dbReference type="BioGRID" id="214171">
    <property type="interactions" value="5"/>
</dbReference>
<dbReference type="ComplexPortal" id="CPX-604">
    <property type="entry name" value="UBC13-MMS2 ubiquitin-conjugating enzyme E2 complex"/>
</dbReference>
<dbReference type="FunCoup" id="Q9D2M8">
    <property type="interactions" value="3979"/>
</dbReference>
<dbReference type="IntAct" id="Q9D2M8">
    <property type="interactions" value="5"/>
</dbReference>
<dbReference type="MINT" id="Q9D2M8"/>
<dbReference type="STRING" id="10090.ENSMUSP00000111443"/>
<dbReference type="GlyGen" id="Q9D2M8">
    <property type="glycosylation" value="2 sites, 1 N-linked glycan (1 site), 1 O-linked glycan (1 site)"/>
</dbReference>
<dbReference type="iPTMnet" id="Q9D2M8"/>
<dbReference type="PhosphoSitePlus" id="Q9D2M8"/>
<dbReference type="SwissPalm" id="Q9D2M8"/>
<dbReference type="jPOST" id="Q9D2M8"/>
<dbReference type="PaxDb" id="10090-ENSMUSP00000111443"/>
<dbReference type="PeptideAtlas" id="Q9D2M8"/>
<dbReference type="ProteomicsDB" id="297777">
    <molecule id="Q9D2M8-1"/>
</dbReference>
<dbReference type="ProteomicsDB" id="297778">
    <molecule id="Q9D2M8-2"/>
</dbReference>
<dbReference type="Pumba" id="Q9D2M8"/>
<dbReference type="Antibodypedia" id="24348">
    <property type="antibodies" value="299 antibodies from 32 providers"/>
</dbReference>
<dbReference type="DNASU" id="70620"/>
<dbReference type="Ensembl" id="ENSMUST00000115776.2">
    <molecule id="Q9D2M8-2"/>
    <property type="protein sequence ID" value="ENSMUSP00000111442.2"/>
    <property type="gene ID" value="ENSMUSG00000022674.16"/>
</dbReference>
<dbReference type="Ensembl" id="ENSMUST00000115777.10">
    <molecule id="Q9D2M8-1"/>
    <property type="protein sequence ID" value="ENSMUSP00000111443.4"/>
    <property type="gene ID" value="ENSMUSG00000022674.16"/>
</dbReference>
<dbReference type="GeneID" id="70620"/>
<dbReference type="KEGG" id="mmu:70620"/>
<dbReference type="UCSC" id="uc007yhp.2">
    <molecule id="Q9D2M8-1"/>
    <property type="organism name" value="mouse"/>
</dbReference>
<dbReference type="UCSC" id="uc007yhq.2">
    <molecule id="Q9D2M8-2"/>
    <property type="organism name" value="mouse"/>
</dbReference>
<dbReference type="AGR" id="MGI:1917870"/>
<dbReference type="CTD" id="7336"/>
<dbReference type="MGI" id="MGI:1917870">
    <property type="gene designation" value="Ube2v2"/>
</dbReference>
<dbReference type="VEuPathDB" id="HostDB:ENSMUSG00000022674"/>
<dbReference type="eggNOG" id="KOG0896">
    <property type="taxonomic scope" value="Eukaryota"/>
</dbReference>
<dbReference type="GeneTree" id="ENSGT00740000115534"/>
<dbReference type="HOGENOM" id="CLU_063065_3_0_1"/>
<dbReference type="InParanoid" id="Q9D2M8"/>
<dbReference type="OMA" id="NWSREST"/>
<dbReference type="OrthoDB" id="6508832at2759"/>
<dbReference type="PhylomeDB" id="Q9D2M8"/>
<dbReference type="TreeFam" id="TF316971"/>
<dbReference type="Reactome" id="R-MMU-5693565">
    <property type="pathway name" value="Recruitment and ATM-mediated phosphorylation of repair and signaling proteins at DNA double strand breaks"/>
</dbReference>
<dbReference type="Reactome" id="R-MMU-5693571">
    <property type="pathway name" value="Nonhomologous End-Joining (NHEJ)"/>
</dbReference>
<dbReference type="Reactome" id="R-MMU-5693607">
    <property type="pathway name" value="Processing of DNA double-strand break ends"/>
</dbReference>
<dbReference type="Reactome" id="R-MMU-5696395">
    <property type="pathway name" value="Formation of Incision Complex in GG-NER"/>
</dbReference>
<dbReference type="Reactome" id="R-MMU-69473">
    <property type="pathway name" value="G2/M DNA damage checkpoint"/>
</dbReference>
<dbReference type="Reactome" id="R-MMU-8866654">
    <property type="pathway name" value="E3 ubiquitin ligases ubiquitinate target proteins"/>
</dbReference>
<dbReference type="Reactome" id="R-MMU-983168">
    <property type="pathway name" value="Antigen processing: Ubiquitination &amp; Proteasome degradation"/>
</dbReference>
<dbReference type="BioGRID-ORCS" id="70620">
    <property type="hits" value="6 hits in 112 CRISPR screens"/>
</dbReference>
<dbReference type="CD-CODE" id="CE726F99">
    <property type="entry name" value="Postsynaptic density"/>
</dbReference>
<dbReference type="ChiTaRS" id="Ube2v2">
    <property type="organism name" value="mouse"/>
</dbReference>
<dbReference type="PRO" id="PR:Q9D2M8"/>
<dbReference type="Proteomes" id="UP000000589">
    <property type="component" value="Chromosome 16"/>
</dbReference>
<dbReference type="RNAct" id="Q9D2M8">
    <property type="molecule type" value="protein"/>
</dbReference>
<dbReference type="Bgee" id="ENSMUSG00000022674">
    <property type="expression patterns" value="Expressed in dentate gyrus of hippocampal formation granule cell and 237 other cell types or tissues"/>
</dbReference>
<dbReference type="ExpressionAtlas" id="Q9D2M8">
    <property type="expression patterns" value="baseline and differential"/>
</dbReference>
<dbReference type="GO" id="GO:0005654">
    <property type="term" value="C:nucleoplasm"/>
    <property type="evidence" value="ECO:0007669"/>
    <property type="project" value="Ensembl"/>
</dbReference>
<dbReference type="GO" id="GO:0005634">
    <property type="term" value="C:nucleus"/>
    <property type="evidence" value="ECO:0000266"/>
    <property type="project" value="ComplexPortal"/>
</dbReference>
<dbReference type="GO" id="GO:0031372">
    <property type="term" value="C:UBC13-MMS2 complex"/>
    <property type="evidence" value="ECO:0000266"/>
    <property type="project" value="ComplexPortal"/>
</dbReference>
<dbReference type="GO" id="GO:0000729">
    <property type="term" value="P:DNA double-strand break processing"/>
    <property type="evidence" value="ECO:0007669"/>
    <property type="project" value="Ensembl"/>
</dbReference>
<dbReference type="GO" id="GO:0042275">
    <property type="term" value="P:error-free postreplication DNA repair"/>
    <property type="evidence" value="ECO:0000316"/>
    <property type="project" value="MGI"/>
</dbReference>
<dbReference type="GO" id="GO:2000781">
    <property type="term" value="P:positive regulation of double-strand break repair"/>
    <property type="evidence" value="ECO:0000266"/>
    <property type="project" value="ComplexPortal"/>
</dbReference>
<dbReference type="GO" id="GO:1902523">
    <property type="term" value="P:positive regulation of protein K63-linked ubiquitination"/>
    <property type="evidence" value="ECO:0000266"/>
    <property type="project" value="ComplexPortal"/>
</dbReference>
<dbReference type="CDD" id="cd23807">
    <property type="entry name" value="UEV_UBE2V"/>
    <property type="match status" value="1"/>
</dbReference>
<dbReference type="FunFam" id="3.10.110.10:FF:000012">
    <property type="entry name" value="Ubiquitin-conjugating enzyme E2 variant 2"/>
    <property type="match status" value="1"/>
</dbReference>
<dbReference type="Gene3D" id="3.10.110.10">
    <property type="entry name" value="Ubiquitin Conjugating Enzyme"/>
    <property type="match status" value="1"/>
</dbReference>
<dbReference type="InterPro" id="IPR000608">
    <property type="entry name" value="UBQ-conjugat_E2_core"/>
</dbReference>
<dbReference type="InterPro" id="IPR016135">
    <property type="entry name" value="UBQ-conjugating_enzyme/RWD"/>
</dbReference>
<dbReference type="PANTHER" id="PTHR24068">
    <property type="entry name" value="UBIQUITIN-CONJUGATING ENZYME E2"/>
    <property type="match status" value="1"/>
</dbReference>
<dbReference type="Pfam" id="PF00179">
    <property type="entry name" value="UQ_con"/>
    <property type="match status" value="1"/>
</dbReference>
<dbReference type="SMART" id="SM00212">
    <property type="entry name" value="UBCc"/>
    <property type="match status" value="1"/>
</dbReference>
<dbReference type="SUPFAM" id="SSF54495">
    <property type="entry name" value="UBC-like"/>
    <property type="match status" value="1"/>
</dbReference>
<dbReference type="PROSITE" id="PS50127">
    <property type="entry name" value="UBC_2"/>
    <property type="match status" value="1"/>
</dbReference>
<feature type="initiator methionine" description="Removed" evidence="2">
    <location>
        <position position="1"/>
    </location>
</feature>
<feature type="chain" id="PRO_0000082603" description="Ubiquitin-conjugating enzyme E2 variant 2">
    <location>
        <begin position="2"/>
        <end position="145"/>
    </location>
</feature>
<feature type="domain" description="UBC core" evidence="3">
    <location>
        <begin position="10"/>
        <end position="145"/>
    </location>
</feature>
<feature type="modified residue" description="N-acetylalanine" evidence="2">
    <location>
        <position position="2"/>
    </location>
</feature>
<feature type="splice variant" id="VSP_011529" description="In isoform 2." evidence="5">
    <location>
        <begin position="56"/>
        <end position="97"/>
    </location>
</feature>
<feature type="sequence conflict" description="In Ref. 2; BAC26094." evidence="6" ref="2">
    <original>L</original>
    <variation>W</variation>
    <location>
        <position position="16"/>
    </location>
</feature>
<feature type="sequence conflict" description="In Ref. 2; BAC25968/BAC27311/BAC28128 and 3; BAB31753." evidence="6" ref="2 3">
    <original>D</original>
    <variation>N</variation>
    <location>
        <position position="38"/>
    </location>
</feature>
<feature type="sequence conflict" description="In Ref. 1; AAG22084." evidence="6" ref="1">
    <original>A</original>
    <variation>D</variation>
    <location>
        <position position="76"/>
    </location>
</feature>
<reference key="1">
    <citation type="journal article" date="2001" name="Biochim. Biophys. Acta">
        <title>Molecular cloning and functional characterization of two murine cDNAs which encode Ubc variants involved in DNA repair and mutagenesis.</title>
        <authorList>
            <person name="Franko J."/>
            <person name="Ashley C."/>
            <person name="Xiao W."/>
        </authorList>
    </citation>
    <scope>NUCLEOTIDE SEQUENCE [MRNA] (ISOFORM 1)</scope>
    <scope>FUNCTION</scope>
</reference>
<reference key="2">
    <citation type="journal article" date="2005" name="Science">
        <title>The transcriptional landscape of the mammalian genome.</title>
        <authorList>
            <person name="Carninci P."/>
            <person name="Kasukawa T."/>
            <person name="Katayama S."/>
            <person name="Gough J."/>
            <person name="Frith M.C."/>
            <person name="Maeda N."/>
            <person name="Oyama R."/>
            <person name="Ravasi T."/>
            <person name="Lenhard B."/>
            <person name="Wells C."/>
            <person name="Kodzius R."/>
            <person name="Shimokawa K."/>
            <person name="Bajic V.B."/>
            <person name="Brenner S.E."/>
            <person name="Batalov S."/>
            <person name="Forrest A.R."/>
            <person name="Zavolan M."/>
            <person name="Davis M.J."/>
            <person name="Wilming L.G."/>
            <person name="Aidinis V."/>
            <person name="Allen J.E."/>
            <person name="Ambesi-Impiombato A."/>
            <person name="Apweiler R."/>
            <person name="Aturaliya R.N."/>
            <person name="Bailey T.L."/>
            <person name="Bansal M."/>
            <person name="Baxter L."/>
            <person name="Beisel K.W."/>
            <person name="Bersano T."/>
            <person name="Bono H."/>
            <person name="Chalk A.M."/>
            <person name="Chiu K.P."/>
            <person name="Choudhary V."/>
            <person name="Christoffels A."/>
            <person name="Clutterbuck D.R."/>
            <person name="Crowe M.L."/>
            <person name="Dalla E."/>
            <person name="Dalrymple B.P."/>
            <person name="de Bono B."/>
            <person name="Della Gatta G."/>
            <person name="di Bernardo D."/>
            <person name="Down T."/>
            <person name="Engstrom P."/>
            <person name="Fagiolini M."/>
            <person name="Faulkner G."/>
            <person name="Fletcher C.F."/>
            <person name="Fukushima T."/>
            <person name="Furuno M."/>
            <person name="Futaki S."/>
            <person name="Gariboldi M."/>
            <person name="Georgii-Hemming P."/>
            <person name="Gingeras T.R."/>
            <person name="Gojobori T."/>
            <person name="Green R.E."/>
            <person name="Gustincich S."/>
            <person name="Harbers M."/>
            <person name="Hayashi Y."/>
            <person name="Hensch T.K."/>
            <person name="Hirokawa N."/>
            <person name="Hill D."/>
            <person name="Huminiecki L."/>
            <person name="Iacono M."/>
            <person name="Ikeo K."/>
            <person name="Iwama A."/>
            <person name="Ishikawa T."/>
            <person name="Jakt M."/>
            <person name="Kanapin A."/>
            <person name="Katoh M."/>
            <person name="Kawasawa Y."/>
            <person name="Kelso J."/>
            <person name="Kitamura H."/>
            <person name="Kitano H."/>
            <person name="Kollias G."/>
            <person name="Krishnan S.P."/>
            <person name="Kruger A."/>
            <person name="Kummerfeld S.K."/>
            <person name="Kurochkin I.V."/>
            <person name="Lareau L.F."/>
            <person name="Lazarevic D."/>
            <person name="Lipovich L."/>
            <person name="Liu J."/>
            <person name="Liuni S."/>
            <person name="McWilliam S."/>
            <person name="Madan Babu M."/>
            <person name="Madera M."/>
            <person name="Marchionni L."/>
            <person name="Matsuda H."/>
            <person name="Matsuzawa S."/>
            <person name="Miki H."/>
            <person name="Mignone F."/>
            <person name="Miyake S."/>
            <person name="Morris K."/>
            <person name="Mottagui-Tabar S."/>
            <person name="Mulder N."/>
            <person name="Nakano N."/>
            <person name="Nakauchi H."/>
            <person name="Ng P."/>
            <person name="Nilsson R."/>
            <person name="Nishiguchi S."/>
            <person name="Nishikawa S."/>
            <person name="Nori F."/>
            <person name="Ohara O."/>
            <person name="Okazaki Y."/>
            <person name="Orlando V."/>
            <person name="Pang K.C."/>
            <person name="Pavan W.J."/>
            <person name="Pavesi G."/>
            <person name="Pesole G."/>
            <person name="Petrovsky N."/>
            <person name="Piazza S."/>
            <person name="Reed J."/>
            <person name="Reid J.F."/>
            <person name="Ring B.Z."/>
            <person name="Ringwald M."/>
            <person name="Rost B."/>
            <person name="Ruan Y."/>
            <person name="Salzberg S.L."/>
            <person name="Sandelin A."/>
            <person name="Schneider C."/>
            <person name="Schoenbach C."/>
            <person name="Sekiguchi K."/>
            <person name="Semple C.A."/>
            <person name="Seno S."/>
            <person name="Sessa L."/>
            <person name="Sheng Y."/>
            <person name="Shibata Y."/>
            <person name="Shimada H."/>
            <person name="Shimada K."/>
            <person name="Silva D."/>
            <person name="Sinclair B."/>
            <person name="Sperling S."/>
            <person name="Stupka E."/>
            <person name="Sugiura K."/>
            <person name="Sultana R."/>
            <person name="Takenaka Y."/>
            <person name="Taki K."/>
            <person name="Tammoja K."/>
            <person name="Tan S.L."/>
            <person name="Tang S."/>
            <person name="Taylor M.S."/>
            <person name="Tegner J."/>
            <person name="Teichmann S.A."/>
            <person name="Ueda H.R."/>
            <person name="van Nimwegen E."/>
            <person name="Verardo R."/>
            <person name="Wei C.L."/>
            <person name="Yagi K."/>
            <person name="Yamanishi H."/>
            <person name="Zabarovsky E."/>
            <person name="Zhu S."/>
            <person name="Zimmer A."/>
            <person name="Hide W."/>
            <person name="Bult C."/>
            <person name="Grimmond S.M."/>
            <person name="Teasdale R.D."/>
            <person name="Liu E.T."/>
            <person name="Brusic V."/>
            <person name="Quackenbush J."/>
            <person name="Wahlestedt C."/>
            <person name="Mattick J.S."/>
            <person name="Hume D.A."/>
            <person name="Kai C."/>
            <person name="Sasaki D."/>
            <person name="Tomaru Y."/>
            <person name="Fukuda S."/>
            <person name="Kanamori-Katayama M."/>
            <person name="Suzuki M."/>
            <person name="Aoki J."/>
            <person name="Arakawa T."/>
            <person name="Iida J."/>
            <person name="Imamura K."/>
            <person name="Itoh M."/>
            <person name="Kato T."/>
            <person name="Kawaji H."/>
            <person name="Kawagashira N."/>
            <person name="Kawashima T."/>
            <person name="Kojima M."/>
            <person name="Kondo S."/>
            <person name="Konno H."/>
            <person name="Nakano K."/>
            <person name="Ninomiya N."/>
            <person name="Nishio T."/>
            <person name="Okada M."/>
            <person name="Plessy C."/>
            <person name="Shibata K."/>
            <person name="Shiraki T."/>
            <person name="Suzuki S."/>
            <person name="Tagami M."/>
            <person name="Waki K."/>
            <person name="Watahiki A."/>
            <person name="Okamura-Oho Y."/>
            <person name="Suzuki H."/>
            <person name="Kawai J."/>
            <person name="Hayashizaki Y."/>
        </authorList>
    </citation>
    <scope>NUCLEOTIDE SEQUENCE [LARGE SCALE MRNA] (ISOFORMS 1 AND 2)</scope>
    <source>
        <tissue>Embryo</tissue>
        <tissue>Fetus</tissue>
        <tissue>Skin</tissue>
    </source>
</reference>
<reference key="3">
    <citation type="journal article" date="2009" name="PLoS Biol.">
        <title>Lineage-specific biology revealed by a finished genome assembly of the mouse.</title>
        <authorList>
            <person name="Church D.M."/>
            <person name="Goodstadt L."/>
            <person name="Hillier L.W."/>
            <person name="Zody M.C."/>
            <person name="Goldstein S."/>
            <person name="She X."/>
            <person name="Bult C.J."/>
            <person name="Agarwala R."/>
            <person name="Cherry J.L."/>
            <person name="DiCuccio M."/>
            <person name="Hlavina W."/>
            <person name="Kapustin Y."/>
            <person name="Meric P."/>
            <person name="Maglott D."/>
            <person name="Birtle Z."/>
            <person name="Marques A.C."/>
            <person name="Graves T."/>
            <person name="Zhou S."/>
            <person name="Teague B."/>
            <person name="Potamousis K."/>
            <person name="Churas C."/>
            <person name="Place M."/>
            <person name="Herschleb J."/>
            <person name="Runnheim R."/>
            <person name="Forrest D."/>
            <person name="Amos-Landgraf J."/>
            <person name="Schwartz D.C."/>
            <person name="Cheng Z."/>
            <person name="Lindblad-Toh K."/>
            <person name="Eichler E.E."/>
            <person name="Ponting C.P."/>
        </authorList>
    </citation>
    <scope>NUCLEOTIDE SEQUENCE [LARGE SCALE GENOMIC DNA]</scope>
    <source>
        <strain>C57BL/6J</strain>
    </source>
</reference>
<reference key="4">
    <citation type="journal article" date="2004" name="Genome Res.">
        <title>The status, quality, and expansion of the NIH full-length cDNA project: the Mammalian Gene Collection (MGC).</title>
        <authorList>
            <consortium name="The MGC Project Team"/>
        </authorList>
    </citation>
    <scope>NUCLEOTIDE SEQUENCE [LARGE SCALE MRNA] (ISOFORM 1)</scope>
    <source>
        <strain>C57BL/6J</strain>
        <tissue>Embryonic germ cell</tissue>
        <tissue>Fetal brain</tissue>
        <tissue>Mammary tumor</tissue>
    </source>
</reference>
<reference key="5">
    <citation type="journal article" date="2010" name="Cell">
        <title>A tissue-specific atlas of mouse protein phosphorylation and expression.</title>
        <authorList>
            <person name="Huttlin E.L."/>
            <person name="Jedrychowski M.P."/>
            <person name="Elias J.E."/>
            <person name="Goswami T."/>
            <person name="Rad R."/>
            <person name="Beausoleil S.A."/>
            <person name="Villen J."/>
            <person name="Haas W."/>
            <person name="Sowa M.E."/>
            <person name="Gygi S.P."/>
        </authorList>
    </citation>
    <scope>IDENTIFICATION BY MASS SPECTROMETRY [LARGE SCALE ANALYSIS]</scope>
    <source>
        <tissue>Brain</tissue>
        <tissue>Kidney</tissue>
        <tissue>Liver</tissue>
        <tissue>Lung</tissue>
        <tissue>Testis</tissue>
    </source>
</reference>
<comment type="function">
    <text evidence="4">Has no ubiquitin ligase activity on its own. The UBE2V2/UBE2N heterodimer catalyzes the synthesis of non-canonical poly-ubiquitin chains that are linked through 'Lys-63'. This type of poly-ubiquitination does not lead to protein degradation by the proteasome. Mediates transcriptional activation of target genes. Plays a role in the control of progress through the cell cycle and differentiation. Plays a role in the error-free DNA repair pathway and contributes to the survival of cells after DNA damage.</text>
</comment>
<comment type="subunit">
    <text evidence="1">Heterodimer with UBE2N. Binds CHFR (By similarity).</text>
</comment>
<comment type="alternative products">
    <event type="alternative splicing"/>
    <isoform>
        <id>Q9D2M8-1</id>
        <name>1</name>
        <sequence type="displayed"/>
    </isoform>
    <isoform>
        <id>Q9D2M8-2</id>
        <name>2</name>
        <sequence type="described" ref="VSP_011529"/>
    </isoform>
</comment>
<comment type="similarity">
    <text evidence="3">Belongs to the ubiquitin-conjugating enzyme family.</text>
</comment>
<comment type="sequence caution" evidence="6">
    <conflict type="erroneous initiation">
        <sequence resource="EMBL-CDS" id="AAH29742"/>
    </conflict>
</comment>
<organism>
    <name type="scientific">Mus musculus</name>
    <name type="common">Mouse</name>
    <dbReference type="NCBI Taxonomy" id="10090"/>
    <lineage>
        <taxon>Eukaryota</taxon>
        <taxon>Metazoa</taxon>
        <taxon>Chordata</taxon>
        <taxon>Craniata</taxon>
        <taxon>Vertebrata</taxon>
        <taxon>Euteleostomi</taxon>
        <taxon>Mammalia</taxon>
        <taxon>Eutheria</taxon>
        <taxon>Euarchontoglires</taxon>
        <taxon>Glires</taxon>
        <taxon>Rodentia</taxon>
        <taxon>Myomorpha</taxon>
        <taxon>Muroidea</taxon>
        <taxon>Muridae</taxon>
        <taxon>Murinae</taxon>
        <taxon>Mus</taxon>
        <taxon>Mus</taxon>
    </lineage>
</organism>